<reference key="1">
    <citation type="submission" date="2005-08" db="EMBL/GenBank/DDBJ databases">
        <title>Complete sequence of Pelodictyon luteolum DSM 273.</title>
        <authorList>
            <consortium name="US DOE Joint Genome Institute"/>
            <person name="Copeland A."/>
            <person name="Lucas S."/>
            <person name="Lapidus A."/>
            <person name="Barry K."/>
            <person name="Detter J.C."/>
            <person name="Glavina T."/>
            <person name="Hammon N."/>
            <person name="Israni S."/>
            <person name="Pitluck S."/>
            <person name="Bryant D."/>
            <person name="Schmutz J."/>
            <person name="Larimer F."/>
            <person name="Land M."/>
            <person name="Kyrpides N."/>
            <person name="Ivanova N."/>
            <person name="Richardson P."/>
        </authorList>
    </citation>
    <scope>NUCLEOTIDE SEQUENCE [LARGE SCALE GENOMIC DNA]</scope>
    <source>
        <strain>DSM 273 / BCRC 81028 / 2530</strain>
    </source>
</reference>
<organism>
    <name type="scientific">Chlorobium luteolum (strain DSM 273 / BCRC 81028 / 2530)</name>
    <name type="common">Pelodictyon luteolum</name>
    <dbReference type="NCBI Taxonomy" id="319225"/>
    <lineage>
        <taxon>Bacteria</taxon>
        <taxon>Pseudomonadati</taxon>
        <taxon>Chlorobiota</taxon>
        <taxon>Chlorobiia</taxon>
        <taxon>Chlorobiales</taxon>
        <taxon>Chlorobiaceae</taxon>
        <taxon>Chlorobium/Pelodictyon group</taxon>
        <taxon>Pelodictyon</taxon>
    </lineage>
</organism>
<sequence length="235" mass="25189">MMTLLAILAVSYIIGSIPTSIMAGKMLKRIDIRQFGSGNAGGTNAFRVLGWKTGLSVTLIDIAKGVIAAVSVVAFFRMHPIGAYPDINEVALRLLAGMAAVIGHVFTVFAGFKGGKGVSTAAGMLIGIAPVSMLIVIGIFLLTVWLSRYVSVASILAAIAFPLIIAIRKYVFELGGGLDYYIRLFGESFSFHDSLDYHLMIFGLIVALAILYTHRANIRRLISGTENRITFGKSA</sequence>
<accession>Q3B181</accession>
<feature type="chain" id="PRO_0000250317" description="Glycerol-3-phosphate acyltransferase">
    <location>
        <begin position="1"/>
        <end position="235"/>
    </location>
</feature>
<feature type="transmembrane region" description="Helical" evidence="1">
    <location>
        <begin position="4"/>
        <end position="24"/>
    </location>
</feature>
<feature type="transmembrane region" description="Helical" evidence="1">
    <location>
        <begin position="56"/>
        <end position="76"/>
    </location>
</feature>
<feature type="transmembrane region" description="Helical" evidence="1">
    <location>
        <begin position="94"/>
        <end position="114"/>
    </location>
</feature>
<feature type="transmembrane region" description="Helical" evidence="1">
    <location>
        <begin position="125"/>
        <end position="145"/>
    </location>
</feature>
<feature type="transmembrane region" description="Helical" evidence="1">
    <location>
        <begin position="152"/>
        <end position="172"/>
    </location>
</feature>
<feature type="transmembrane region" description="Helical" evidence="1">
    <location>
        <begin position="191"/>
        <end position="211"/>
    </location>
</feature>
<keyword id="KW-0997">Cell inner membrane</keyword>
<keyword id="KW-1003">Cell membrane</keyword>
<keyword id="KW-0444">Lipid biosynthesis</keyword>
<keyword id="KW-0443">Lipid metabolism</keyword>
<keyword id="KW-0472">Membrane</keyword>
<keyword id="KW-0594">Phospholipid biosynthesis</keyword>
<keyword id="KW-1208">Phospholipid metabolism</keyword>
<keyword id="KW-1185">Reference proteome</keyword>
<keyword id="KW-0808">Transferase</keyword>
<keyword id="KW-0812">Transmembrane</keyword>
<keyword id="KW-1133">Transmembrane helix</keyword>
<comment type="function">
    <text evidence="1">Catalyzes the transfer of an acyl group from acyl-phosphate (acyl-PO(4)) to glycerol-3-phosphate (G3P) to form lysophosphatidic acid (LPA). This enzyme utilizes acyl-phosphate as fatty acyl donor, but not acyl-CoA or acyl-ACP.</text>
</comment>
<comment type="catalytic activity">
    <reaction evidence="1">
        <text>an acyl phosphate + sn-glycerol 3-phosphate = a 1-acyl-sn-glycero-3-phosphate + phosphate</text>
        <dbReference type="Rhea" id="RHEA:34075"/>
        <dbReference type="ChEBI" id="CHEBI:43474"/>
        <dbReference type="ChEBI" id="CHEBI:57597"/>
        <dbReference type="ChEBI" id="CHEBI:57970"/>
        <dbReference type="ChEBI" id="CHEBI:59918"/>
        <dbReference type="EC" id="2.3.1.275"/>
    </reaction>
</comment>
<comment type="pathway">
    <text evidence="1">Lipid metabolism; phospholipid metabolism.</text>
</comment>
<comment type="subunit">
    <text evidence="1">Probably interacts with PlsX.</text>
</comment>
<comment type="subcellular location">
    <subcellularLocation>
        <location evidence="1">Cell inner membrane</location>
        <topology evidence="1">Multi-pass membrane protein</topology>
    </subcellularLocation>
</comment>
<comment type="similarity">
    <text evidence="1">Belongs to the PlsY family.</text>
</comment>
<protein>
    <recommendedName>
        <fullName evidence="1">Glycerol-3-phosphate acyltransferase</fullName>
    </recommendedName>
    <alternativeName>
        <fullName evidence="1">Acyl-PO4 G3P acyltransferase</fullName>
    </alternativeName>
    <alternativeName>
        <fullName evidence="1">Acyl-phosphate--glycerol-3-phosphate acyltransferase</fullName>
    </alternativeName>
    <alternativeName>
        <fullName evidence="1">G3P acyltransferase</fullName>
        <shortName evidence="1">GPAT</shortName>
        <ecNumber evidence="1">2.3.1.275</ecNumber>
    </alternativeName>
    <alternativeName>
        <fullName evidence="1">Lysophosphatidic acid synthase</fullName>
        <shortName evidence="1">LPA synthase</shortName>
    </alternativeName>
</protein>
<proteinExistence type="inferred from homology"/>
<dbReference type="EC" id="2.3.1.275" evidence="1"/>
<dbReference type="EMBL" id="CP000096">
    <property type="protein sequence ID" value="ABB24900.1"/>
    <property type="molecule type" value="Genomic_DNA"/>
</dbReference>
<dbReference type="RefSeq" id="WP_011358770.1">
    <property type="nucleotide sequence ID" value="NC_007512.1"/>
</dbReference>
<dbReference type="SMR" id="Q3B181"/>
<dbReference type="STRING" id="319225.Plut_2058"/>
<dbReference type="KEGG" id="plt:Plut_2058"/>
<dbReference type="eggNOG" id="COG0344">
    <property type="taxonomic scope" value="Bacteria"/>
</dbReference>
<dbReference type="HOGENOM" id="CLU_081254_3_0_10"/>
<dbReference type="OrthoDB" id="9777124at2"/>
<dbReference type="UniPathway" id="UPA00085"/>
<dbReference type="Proteomes" id="UP000002709">
    <property type="component" value="Chromosome"/>
</dbReference>
<dbReference type="GO" id="GO:0005886">
    <property type="term" value="C:plasma membrane"/>
    <property type="evidence" value="ECO:0007669"/>
    <property type="project" value="UniProtKB-SubCell"/>
</dbReference>
<dbReference type="GO" id="GO:0043772">
    <property type="term" value="F:acyl-phosphate glycerol-3-phosphate acyltransferase activity"/>
    <property type="evidence" value="ECO:0007669"/>
    <property type="project" value="UniProtKB-UniRule"/>
</dbReference>
<dbReference type="GO" id="GO:0008654">
    <property type="term" value="P:phospholipid biosynthetic process"/>
    <property type="evidence" value="ECO:0007669"/>
    <property type="project" value="UniProtKB-UniRule"/>
</dbReference>
<dbReference type="HAMAP" id="MF_01043">
    <property type="entry name" value="PlsY"/>
    <property type="match status" value="1"/>
</dbReference>
<dbReference type="InterPro" id="IPR003811">
    <property type="entry name" value="G3P_acylTferase_PlsY"/>
</dbReference>
<dbReference type="NCBIfam" id="TIGR00023">
    <property type="entry name" value="glycerol-3-phosphate 1-O-acyltransferase PlsY"/>
    <property type="match status" value="1"/>
</dbReference>
<dbReference type="PANTHER" id="PTHR30309:SF0">
    <property type="entry name" value="GLYCEROL-3-PHOSPHATE ACYLTRANSFERASE-RELATED"/>
    <property type="match status" value="1"/>
</dbReference>
<dbReference type="PANTHER" id="PTHR30309">
    <property type="entry name" value="INNER MEMBRANE PROTEIN YGIH"/>
    <property type="match status" value="1"/>
</dbReference>
<dbReference type="Pfam" id="PF02660">
    <property type="entry name" value="G3P_acyltransf"/>
    <property type="match status" value="1"/>
</dbReference>
<dbReference type="SMART" id="SM01207">
    <property type="entry name" value="G3P_acyltransf"/>
    <property type="match status" value="1"/>
</dbReference>
<name>PLSY_CHLL3</name>
<evidence type="ECO:0000255" key="1">
    <source>
        <dbReference type="HAMAP-Rule" id="MF_01043"/>
    </source>
</evidence>
<gene>
    <name evidence="1" type="primary">plsY</name>
    <name type="ordered locus">Plut_2058</name>
</gene>